<organism>
    <name type="scientific">Cyriopagopus hainanus</name>
    <name type="common">Chinese bird spider</name>
    <name type="synonym">Haplopelma hainanum</name>
    <dbReference type="NCBI Taxonomy" id="209901"/>
    <lineage>
        <taxon>Eukaryota</taxon>
        <taxon>Metazoa</taxon>
        <taxon>Ecdysozoa</taxon>
        <taxon>Arthropoda</taxon>
        <taxon>Chelicerata</taxon>
        <taxon>Arachnida</taxon>
        <taxon>Araneae</taxon>
        <taxon>Mygalomorphae</taxon>
        <taxon>Theraphosidae</taxon>
        <taxon>Haplopelma</taxon>
    </lineage>
</organism>
<proteinExistence type="inferred from homology"/>
<dbReference type="EMBL" id="GU293113">
    <property type="protein sequence ID" value="ADB56929.1"/>
    <property type="molecule type" value="Genomic_DNA"/>
</dbReference>
<dbReference type="SMR" id="D2Y2N6"/>
<dbReference type="ArachnoServer" id="AS001821">
    <property type="toxin name" value="U3-theraphotoxin-Hhn1h"/>
</dbReference>
<dbReference type="GO" id="GO:0005576">
    <property type="term" value="C:extracellular region"/>
    <property type="evidence" value="ECO:0007669"/>
    <property type="project" value="UniProtKB-SubCell"/>
</dbReference>
<dbReference type="GO" id="GO:0008200">
    <property type="term" value="F:ion channel inhibitor activity"/>
    <property type="evidence" value="ECO:0007669"/>
    <property type="project" value="InterPro"/>
</dbReference>
<dbReference type="GO" id="GO:0090729">
    <property type="term" value="F:toxin activity"/>
    <property type="evidence" value="ECO:0007669"/>
    <property type="project" value="UniProtKB-KW"/>
</dbReference>
<dbReference type="InterPro" id="IPR011696">
    <property type="entry name" value="Huwentoxin-1"/>
</dbReference>
<dbReference type="InterPro" id="IPR013140">
    <property type="entry name" value="Huwentoxin_CS1"/>
</dbReference>
<dbReference type="Pfam" id="PF07740">
    <property type="entry name" value="Toxin_12"/>
    <property type="match status" value="1"/>
</dbReference>
<dbReference type="SUPFAM" id="SSF57059">
    <property type="entry name" value="omega toxin-like"/>
    <property type="match status" value="1"/>
</dbReference>
<dbReference type="PROSITE" id="PS60021">
    <property type="entry name" value="HWTX_1"/>
    <property type="match status" value="1"/>
</dbReference>
<keyword id="KW-1015">Disulfide bond</keyword>
<keyword id="KW-0872">Ion channel impairing toxin</keyword>
<keyword id="KW-0960">Knottin</keyword>
<keyword id="KW-0964">Secreted</keyword>
<keyword id="KW-0732">Signal</keyword>
<keyword id="KW-0800">Toxin</keyword>
<comment type="function">
    <text evidence="1">Ion channel inhibitor.</text>
</comment>
<comment type="subcellular location">
    <subcellularLocation>
        <location evidence="1">Secreted</location>
    </subcellularLocation>
</comment>
<comment type="tissue specificity">
    <text>Expressed by the venom gland.</text>
</comment>
<comment type="domain">
    <text evidence="1">The presence of a 'disulfide through disulfide knot' structurally defines this protein as a knottin.</text>
</comment>
<comment type="similarity">
    <text evidence="4">Belongs to the neurotoxin 10 (Hwtx-1) family. 51 (Hntx-8) subfamily. Hntx-8 sub-subfamily.</text>
</comment>
<accession>D2Y2N6</accession>
<protein>
    <recommendedName>
        <fullName>U3-theraphotoxin-Hhn1h</fullName>
        <shortName>U3-TRTX-Hhn1h</shortName>
    </recommendedName>
    <alternativeName>
        <fullName>Hainantoxin-VIII-16</fullName>
        <shortName>HNTX-VIII-16</shortName>
    </alternativeName>
</protein>
<evidence type="ECO:0000250" key="1"/>
<evidence type="ECO:0000250" key="2">
    <source>
        <dbReference type="UniProtKB" id="B3FIS6"/>
    </source>
</evidence>
<evidence type="ECO:0000255" key="3"/>
<evidence type="ECO:0000305" key="4"/>
<reference key="1">
    <citation type="journal article" date="2010" name="J. Proteome Res.">
        <title>Molecular diversification of peptide toxins from the tarantula Haplopelma hainanum (Ornithoctonus hainana) venom based on transcriptomic, peptidomic, and genomic analyses.</title>
        <authorList>
            <person name="Tang X."/>
            <person name="Zhang Y."/>
            <person name="Hu W."/>
            <person name="Xu D."/>
            <person name="Tao H."/>
            <person name="Yang X."/>
            <person name="Li Y."/>
            <person name="Jiang L."/>
            <person name="Liang S."/>
        </authorList>
    </citation>
    <scope>NUCLEOTIDE SEQUENCE [LARGE SCALE GENOMIC DNA]</scope>
    <source>
        <tissue>Venom gland</tissue>
    </source>
</reference>
<sequence length="87" mass="10123">MVNMKASMFLTFAGLVLLFVVCYASESEEKEFPKEMLSSIFAVDNDSKQEERDCVGYMRECKEKLCCSGYVCSSRWKWCVLPAPWRR</sequence>
<feature type="signal peptide" evidence="3">
    <location>
        <begin position="1"/>
        <end position="24"/>
    </location>
</feature>
<feature type="propeptide" id="PRO_0000400645" evidence="1">
    <location>
        <begin position="25"/>
        <end position="52"/>
    </location>
</feature>
<feature type="peptide" id="PRO_0000400646" description="U3-theraphotoxin-Hhn1h">
    <location>
        <begin position="53"/>
        <end position="87"/>
    </location>
</feature>
<feature type="disulfide bond" evidence="2">
    <location>
        <begin position="54"/>
        <end position="67"/>
    </location>
</feature>
<feature type="disulfide bond" evidence="2">
    <location>
        <begin position="61"/>
        <end position="72"/>
    </location>
</feature>
<feature type="disulfide bond" evidence="2">
    <location>
        <begin position="66"/>
        <end position="79"/>
    </location>
</feature>
<name>H8P01_CYRHA</name>